<proteinExistence type="inferred from homology"/>
<feature type="chain" id="PRO_0000294703" description="Small ribosomal subunit protein uS11">
    <location>
        <begin position="1"/>
        <end position="134"/>
    </location>
</feature>
<dbReference type="EMBL" id="CP000512">
    <property type="protein sequence ID" value="ABM31228.1"/>
    <property type="molecule type" value="Genomic_DNA"/>
</dbReference>
<dbReference type="RefSeq" id="WP_011793799.1">
    <property type="nucleotide sequence ID" value="NC_008752.1"/>
</dbReference>
<dbReference type="SMR" id="A1TJU0"/>
<dbReference type="STRING" id="397945.Aave_0624"/>
<dbReference type="GeneID" id="34239428"/>
<dbReference type="GeneID" id="79790338"/>
<dbReference type="KEGG" id="aav:Aave_0624"/>
<dbReference type="eggNOG" id="COG0100">
    <property type="taxonomic scope" value="Bacteria"/>
</dbReference>
<dbReference type="HOGENOM" id="CLU_072439_5_0_4"/>
<dbReference type="OrthoDB" id="9806415at2"/>
<dbReference type="Proteomes" id="UP000002596">
    <property type="component" value="Chromosome"/>
</dbReference>
<dbReference type="GO" id="GO:1990904">
    <property type="term" value="C:ribonucleoprotein complex"/>
    <property type="evidence" value="ECO:0007669"/>
    <property type="project" value="UniProtKB-KW"/>
</dbReference>
<dbReference type="GO" id="GO:0005840">
    <property type="term" value="C:ribosome"/>
    <property type="evidence" value="ECO:0007669"/>
    <property type="project" value="UniProtKB-KW"/>
</dbReference>
<dbReference type="GO" id="GO:0019843">
    <property type="term" value="F:rRNA binding"/>
    <property type="evidence" value="ECO:0007669"/>
    <property type="project" value="UniProtKB-UniRule"/>
</dbReference>
<dbReference type="GO" id="GO:0003735">
    <property type="term" value="F:structural constituent of ribosome"/>
    <property type="evidence" value="ECO:0007669"/>
    <property type="project" value="InterPro"/>
</dbReference>
<dbReference type="GO" id="GO:0006412">
    <property type="term" value="P:translation"/>
    <property type="evidence" value="ECO:0007669"/>
    <property type="project" value="UniProtKB-UniRule"/>
</dbReference>
<dbReference type="FunFam" id="3.30.420.80:FF:000001">
    <property type="entry name" value="30S ribosomal protein S11"/>
    <property type="match status" value="1"/>
</dbReference>
<dbReference type="Gene3D" id="3.30.420.80">
    <property type="entry name" value="Ribosomal protein S11"/>
    <property type="match status" value="1"/>
</dbReference>
<dbReference type="HAMAP" id="MF_01310">
    <property type="entry name" value="Ribosomal_uS11"/>
    <property type="match status" value="1"/>
</dbReference>
<dbReference type="InterPro" id="IPR001971">
    <property type="entry name" value="Ribosomal_uS11"/>
</dbReference>
<dbReference type="InterPro" id="IPR019981">
    <property type="entry name" value="Ribosomal_uS11_bac-type"/>
</dbReference>
<dbReference type="InterPro" id="IPR018102">
    <property type="entry name" value="Ribosomal_uS11_CS"/>
</dbReference>
<dbReference type="InterPro" id="IPR036967">
    <property type="entry name" value="Ribosomal_uS11_sf"/>
</dbReference>
<dbReference type="NCBIfam" id="NF003698">
    <property type="entry name" value="PRK05309.1"/>
    <property type="match status" value="1"/>
</dbReference>
<dbReference type="NCBIfam" id="TIGR03632">
    <property type="entry name" value="uS11_bact"/>
    <property type="match status" value="1"/>
</dbReference>
<dbReference type="PANTHER" id="PTHR11759">
    <property type="entry name" value="40S RIBOSOMAL PROTEIN S14/30S RIBOSOMAL PROTEIN S11"/>
    <property type="match status" value="1"/>
</dbReference>
<dbReference type="Pfam" id="PF00411">
    <property type="entry name" value="Ribosomal_S11"/>
    <property type="match status" value="1"/>
</dbReference>
<dbReference type="PIRSF" id="PIRSF002131">
    <property type="entry name" value="Ribosomal_S11"/>
    <property type="match status" value="1"/>
</dbReference>
<dbReference type="SUPFAM" id="SSF53137">
    <property type="entry name" value="Translational machinery components"/>
    <property type="match status" value="1"/>
</dbReference>
<dbReference type="PROSITE" id="PS00054">
    <property type="entry name" value="RIBOSOMAL_S11"/>
    <property type="match status" value="1"/>
</dbReference>
<comment type="function">
    <text evidence="1">Located on the platform of the 30S subunit, it bridges several disparate RNA helices of the 16S rRNA. Forms part of the Shine-Dalgarno cleft in the 70S ribosome.</text>
</comment>
<comment type="subunit">
    <text evidence="1">Part of the 30S ribosomal subunit. Interacts with proteins S7 and S18. Binds to IF-3.</text>
</comment>
<comment type="similarity">
    <text evidence="1">Belongs to the universal ribosomal protein uS11 family.</text>
</comment>
<organism>
    <name type="scientific">Paracidovorax citrulli (strain AAC00-1)</name>
    <name type="common">Acidovorax citrulli</name>
    <dbReference type="NCBI Taxonomy" id="397945"/>
    <lineage>
        <taxon>Bacteria</taxon>
        <taxon>Pseudomonadati</taxon>
        <taxon>Pseudomonadota</taxon>
        <taxon>Betaproteobacteria</taxon>
        <taxon>Burkholderiales</taxon>
        <taxon>Comamonadaceae</taxon>
        <taxon>Paracidovorax</taxon>
    </lineage>
</organism>
<gene>
    <name evidence="1" type="primary">rpsK</name>
    <name type="ordered locus">Aave_0624</name>
</gene>
<name>RS11_PARC0</name>
<sequence length="134" mass="14177">MAKSPANNAAQRVRKKVRKNVSDGIAHVHASFNNTIITITDRQGNALSWASSGGQGFKGSRKSTPFAAQVASEVAGRAAIEQGIKNLDVEIKGPGPGRESSVRALGALGIRITSISDVTPVPHNGCRPQKRRRI</sequence>
<evidence type="ECO:0000255" key="1">
    <source>
        <dbReference type="HAMAP-Rule" id="MF_01310"/>
    </source>
</evidence>
<evidence type="ECO:0000305" key="2"/>
<accession>A1TJU0</accession>
<protein>
    <recommendedName>
        <fullName evidence="1">Small ribosomal subunit protein uS11</fullName>
    </recommendedName>
    <alternativeName>
        <fullName evidence="2">30S ribosomal protein S11</fullName>
    </alternativeName>
</protein>
<reference key="1">
    <citation type="submission" date="2006-12" db="EMBL/GenBank/DDBJ databases">
        <title>Complete sequence of Acidovorax avenae subsp. citrulli AAC00-1.</title>
        <authorList>
            <person name="Copeland A."/>
            <person name="Lucas S."/>
            <person name="Lapidus A."/>
            <person name="Barry K."/>
            <person name="Detter J.C."/>
            <person name="Glavina del Rio T."/>
            <person name="Dalin E."/>
            <person name="Tice H."/>
            <person name="Pitluck S."/>
            <person name="Kiss H."/>
            <person name="Brettin T."/>
            <person name="Bruce D."/>
            <person name="Han C."/>
            <person name="Tapia R."/>
            <person name="Gilna P."/>
            <person name="Schmutz J."/>
            <person name="Larimer F."/>
            <person name="Land M."/>
            <person name="Hauser L."/>
            <person name="Kyrpides N."/>
            <person name="Kim E."/>
            <person name="Stahl D."/>
            <person name="Richardson P."/>
        </authorList>
    </citation>
    <scope>NUCLEOTIDE SEQUENCE [LARGE SCALE GENOMIC DNA]</scope>
    <source>
        <strain>AAC00-1</strain>
    </source>
</reference>
<keyword id="KW-0687">Ribonucleoprotein</keyword>
<keyword id="KW-0689">Ribosomal protein</keyword>
<keyword id="KW-0694">RNA-binding</keyword>
<keyword id="KW-0699">rRNA-binding</keyword>